<reference key="1">
    <citation type="submission" date="2008-06" db="EMBL/GenBank/DDBJ databases">
        <title>Complete sequence of Pelodictyon phaeoclathratiforme BU-1.</title>
        <authorList>
            <consortium name="US DOE Joint Genome Institute"/>
            <person name="Lucas S."/>
            <person name="Copeland A."/>
            <person name="Lapidus A."/>
            <person name="Glavina del Rio T."/>
            <person name="Dalin E."/>
            <person name="Tice H."/>
            <person name="Bruce D."/>
            <person name="Goodwin L."/>
            <person name="Pitluck S."/>
            <person name="Schmutz J."/>
            <person name="Larimer F."/>
            <person name="Land M."/>
            <person name="Hauser L."/>
            <person name="Kyrpides N."/>
            <person name="Mikhailova N."/>
            <person name="Liu Z."/>
            <person name="Li T."/>
            <person name="Zhao F."/>
            <person name="Overmann J."/>
            <person name="Bryant D.A."/>
            <person name="Richardson P."/>
        </authorList>
    </citation>
    <scope>NUCLEOTIDE SEQUENCE [LARGE SCALE GENOMIC DNA]</scope>
    <source>
        <strain>DSM 5477 / BU-1</strain>
    </source>
</reference>
<gene>
    <name evidence="1" type="primary">lipA</name>
    <name type="ordered locus">Ppha_1316</name>
</gene>
<protein>
    <recommendedName>
        <fullName evidence="1">Lipoyl synthase</fullName>
        <ecNumber evidence="1">2.8.1.8</ecNumber>
    </recommendedName>
    <alternativeName>
        <fullName evidence="1">Lip-syn</fullName>
        <shortName evidence="1">LS</shortName>
    </alternativeName>
    <alternativeName>
        <fullName evidence="1">Lipoate synthase</fullName>
    </alternativeName>
    <alternativeName>
        <fullName evidence="1">Lipoic acid synthase</fullName>
    </alternativeName>
    <alternativeName>
        <fullName evidence="1">Sulfur insertion protein LipA</fullName>
    </alternativeName>
</protein>
<evidence type="ECO:0000255" key="1">
    <source>
        <dbReference type="HAMAP-Rule" id="MF_00206"/>
    </source>
</evidence>
<evidence type="ECO:0000255" key="2">
    <source>
        <dbReference type="PROSITE-ProRule" id="PRU01266"/>
    </source>
</evidence>
<name>LIPA_PELPB</name>
<sequence length="294" mass="32636">MEHVPGKKPEWLKIRLSSGASFASTKRLLDRHSLHTVCRSAMCPNLQECWSRGTATFLLLGTVCTRNCRFCAVGKASNPPAPDPREPEKIALAVHSMQLKHTVLTSVTRDDLPDGGAEYWVATIRAIRTLNPFVTIECLIPDFEGNERAMDLVMAELPEILNHNIETVPSLYTKVRPQANYATSLRLLQRAKEMHGLTTKSGMMVGMGETAEEVAISLGDLLLHGCDMVTIGQYLQPSALHLPVERYITPEEFEQYRSFAEGAGFRHVQSGPFVRSSYHAEALTKKTETVCSPI</sequence>
<keyword id="KW-0004">4Fe-4S</keyword>
<keyword id="KW-0963">Cytoplasm</keyword>
<keyword id="KW-0408">Iron</keyword>
<keyword id="KW-0411">Iron-sulfur</keyword>
<keyword id="KW-0479">Metal-binding</keyword>
<keyword id="KW-1185">Reference proteome</keyword>
<keyword id="KW-0949">S-adenosyl-L-methionine</keyword>
<keyword id="KW-0808">Transferase</keyword>
<organism>
    <name type="scientific">Pelodictyon phaeoclathratiforme (strain DSM 5477 / BU-1)</name>
    <dbReference type="NCBI Taxonomy" id="324925"/>
    <lineage>
        <taxon>Bacteria</taxon>
        <taxon>Pseudomonadati</taxon>
        <taxon>Chlorobiota</taxon>
        <taxon>Chlorobiia</taxon>
        <taxon>Chlorobiales</taxon>
        <taxon>Chlorobiaceae</taxon>
        <taxon>Chlorobium/Pelodictyon group</taxon>
        <taxon>Pelodictyon</taxon>
    </lineage>
</organism>
<proteinExistence type="inferred from homology"/>
<dbReference type="EC" id="2.8.1.8" evidence="1"/>
<dbReference type="EMBL" id="CP001110">
    <property type="protein sequence ID" value="ACF43581.1"/>
    <property type="molecule type" value="Genomic_DNA"/>
</dbReference>
<dbReference type="RefSeq" id="WP_012508072.1">
    <property type="nucleotide sequence ID" value="NC_011060.1"/>
</dbReference>
<dbReference type="SMR" id="B4SHB4"/>
<dbReference type="STRING" id="324925.Ppha_1316"/>
<dbReference type="KEGG" id="pph:Ppha_1316"/>
<dbReference type="eggNOG" id="COG0320">
    <property type="taxonomic scope" value="Bacteria"/>
</dbReference>
<dbReference type="HOGENOM" id="CLU_033144_2_0_10"/>
<dbReference type="OrthoDB" id="9787898at2"/>
<dbReference type="UniPathway" id="UPA00538">
    <property type="reaction ID" value="UER00593"/>
</dbReference>
<dbReference type="Proteomes" id="UP000002724">
    <property type="component" value="Chromosome"/>
</dbReference>
<dbReference type="GO" id="GO:0005737">
    <property type="term" value="C:cytoplasm"/>
    <property type="evidence" value="ECO:0007669"/>
    <property type="project" value="UniProtKB-SubCell"/>
</dbReference>
<dbReference type="GO" id="GO:0051539">
    <property type="term" value="F:4 iron, 4 sulfur cluster binding"/>
    <property type="evidence" value="ECO:0007669"/>
    <property type="project" value="UniProtKB-UniRule"/>
</dbReference>
<dbReference type="GO" id="GO:0016992">
    <property type="term" value="F:lipoate synthase activity"/>
    <property type="evidence" value="ECO:0007669"/>
    <property type="project" value="UniProtKB-UniRule"/>
</dbReference>
<dbReference type="GO" id="GO:0046872">
    <property type="term" value="F:metal ion binding"/>
    <property type="evidence" value="ECO:0007669"/>
    <property type="project" value="UniProtKB-KW"/>
</dbReference>
<dbReference type="FunFam" id="3.20.20.70:FF:000040">
    <property type="entry name" value="Lipoyl synthase"/>
    <property type="match status" value="1"/>
</dbReference>
<dbReference type="Gene3D" id="3.20.20.70">
    <property type="entry name" value="Aldolase class I"/>
    <property type="match status" value="1"/>
</dbReference>
<dbReference type="HAMAP" id="MF_00206">
    <property type="entry name" value="Lipoyl_synth"/>
    <property type="match status" value="1"/>
</dbReference>
<dbReference type="InterPro" id="IPR013785">
    <property type="entry name" value="Aldolase_TIM"/>
</dbReference>
<dbReference type="InterPro" id="IPR006638">
    <property type="entry name" value="Elp3/MiaA/NifB-like_rSAM"/>
</dbReference>
<dbReference type="InterPro" id="IPR003698">
    <property type="entry name" value="Lipoyl_synth"/>
</dbReference>
<dbReference type="InterPro" id="IPR007197">
    <property type="entry name" value="rSAM"/>
</dbReference>
<dbReference type="NCBIfam" id="TIGR00510">
    <property type="entry name" value="lipA"/>
    <property type="match status" value="1"/>
</dbReference>
<dbReference type="NCBIfam" id="NF004019">
    <property type="entry name" value="PRK05481.1"/>
    <property type="match status" value="1"/>
</dbReference>
<dbReference type="NCBIfam" id="NF009544">
    <property type="entry name" value="PRK12928.1"/>
    <property type="match status" value="1"/>
</dbReference>
<dbReference type="PANTHER" id="PTHR10949">
    <property type="entry name" value="LIPOYL SYNTHASE"/>
    <property type="match status" value="1"/>
</dbReference>
<dbReference type="PANTHER" id="PTHR10949:SF0">
    <property type="entry name" value="LIPOYL SYNTHASE, MITOCHONDRIAL"/>
    <property type="match status" value="1"/>
</dbReference>
<dbReference type="Pfam" id="PF04055">
    <property type="entry name" value="Radical_SAM"/>
    <property type="match status" value="1"/>
</dbReference>
<dbReference type="PIRSF" id="PIRSF005963">
    <property type="entry name" value="Lipoyl_synth"/>
    <property type="match status" value="1"/>
</dbReference>
<dbReference type="SFLD" id="SFLDF00271">
    <property type="entry name" value="lipoyl_synthase"/>
    <property type="match status" value="1"/>
</dbReference>
<dbReference type="SFLD" id="SFLDG01058">
    <property type="entry name" value="lipoyl_synthase_like"/>
    <property type="match status" value="1"/>
</dbReference>
<dbReference type="SMART" id="SM00729">
    <property type="entry name" value="Elp3"/>
    <property type="match status" value="1"/>
</dbReference>
<dbReference type="SUPFAM" id="SSF102114">
    <property type="entry name" value="Radical SAM enzymes"/>
    <property type="match status" value="1"/>
</dbReference>
<dbReference type="PROSITE" id="PS51918">
    <property type="entry name" value="RADICAL_SAM"/>
    <property type="match status" value="1"/>
</dbReference>
<comment type="function">
    <text evidence="1">Catalyzes the radical-mediated insertion of two sulfur atoms into the C-6 and C-8 positions of the octanoyl moiety bound to the lipoyl domains of lipoate-dependent enzymes, thereby converting the octanoylated domains into lipoylated derivatives.</text>
</comment>
<comment type="catalytic activity">
    <reaction evidence="1">
        <text>[[Fe-S] cluster scaffold protein carrying a second [4Fe-4S](2+) cluster] + N(6)-octanoyl-L-lysyl-[protein] + 2 oxidized [2Fe-2S]-[ferredoxin] + 2 S-adenosyl-L-methionine + 4 H(+) = [[Fe-S] cluster scaffold protein] + N(6)-[(R)-dihydrolipoyl]-L-lysyl-[protein] + 4 Fe(3+) + 2 hydrogen sulfide + 2 5'-deoxyadenosine + 2 L-methionine + 2 reduced [2Fe-2S]-[ferredoxin]</text>
        <dbReference type="Rhea" id="RHEA:16585"/>
        <dbReference type="Rhea" id="RHEA-COMP:9928"/>
        <dbReference type="Rhea" id="RHEA-COMP:10000"/>
        <dbReference type="Rhea" id="RHEA-COMP:10001"/>
        <dbReference type="Rhea" id="RHEA-COMP:10475"/>
        <dbReference type="Rhea" id="RHEA-COMP:14568"/>
        <dbReference type="Rhea" id="RHEA-COMP:14569"/>
        <dbReference type="ChEBI" id="CHEBI:15378"/>
        <dbReference type="ChEBI" id="CHEBI:17319"/>
        <dbReference type="ChEBI" id="CHEBI:29034"/>
        <dbReference type="ChEBI" id="CHEBI:29919"/>
        <dbReference type="ChEBI" id="CHEBI:33722"/>
        <dbReference type="ChEBI" id="CHEBI:33737"/>
        <dbReference type="ChEBI" id="CHEBI:33738"/>
        <dbReference type="ChEBI" id="CHEBI:57844"/>
        <dbReference type="ChEBI" id="CHEBI:59789"/>
        <dbReference type="ChEBI" id="CHEBI:78809"/>
        <dbReference type="ChEBI" id="CHEBI:83100"/>
        <dbReference type="EC" id="2.8.1.8"/>
    </reaction>
</comment>
<comment type="cofactor">
    <cofactor evidence="1">
        <name>[4Fe-4S] cluster</name>
        <dbReference type="ChEBI" id="CHEBI:49883"/>
    </cofactor>
    <text evidence="1">Binds 2 [4Fe-4S] clusters per subunit. One cluster is coordinated with 3 cysteines and an exchangeable S-adenosyl-L-methionine.</text>
</comment>
<comment type="pathway">
    <text evidence="1">Protein modification; protein lipoylation via endogenous pathway; protein N(6)-(lipoyl)lysine from octanoyl-[acyl-carrier-protein]: step 2/2.</text>
</comment>
<comment type="subcellular location">
    <subcellularLocation>
        <location evidence="1">Cytoplasm</location>
    </subcellularLocation>
</comment>
<comment type="similarity">
    <text evidence="1">Belongs to the radical SAM superfamily. Lipoyl synthase family.</text>
</comment>
<feature type="chain" id="PRO_1000099618" description="Lipoyl synthase">
    <location>
        <begin position="1"/>
        <end position="294"/>
    </location>
</feature>
<feature type="domain" description="Radical SAM core" evidence="2">
    <location>
        <begin position="50"/>
        <end position="266"/>
    </location>
</feature>
<feature type="binding site" evidence="1">
    <location>
        <position position="38"/>
    </location>
    <ligand>
        <name>[4Fe-4S] cluster</name>
        <dbReference type="ChEBI" id="CHEBI:49883"/>
        <label>1</label>
    </ligand>
</feature>
<feature type="binding site" evidence="1">
    <location>
        <position position="43"/>
    </location>
    <ligand>
        <name>[4Fe-4S] cluster</name>
        <dbReference type="ChEBI" id="CHEBI:49883"/>
        <label>1</label>
    </ligand>
</feature>
<feature type="binding site" evidence="1">
    <location>
        <position position="49"/>
    </location>
    <ligand>
        <name>[4Fe-4S] cluster</name>
        <dbReference type="ChEBI" id="CHEBI:49883"/>
        <label>1</label>
    </ligand>
</feature>
<feature type="binding site" evidence="1">
    <location>
        <position position="64"/>
    </location>
    <ligand>
        <name>[4Fe-4S] cluster</name>
        <dbReference type="ChEBI" id="CHEBI:49883"/>
        <label>2</label>
        <note>4Fe-4S-S-AdoMet</note>
    </ligand>
</feature>
<feature type="binding site" evidence="1">
    <location>
        <position position="68"/>
    </location>
    <ligand>
        <name>[4Fe-4S] cluster</name>
        <dbReference type="ChEBI" id="CHEBI:49883"/>
        <label>2</label>
        <note>4Fe-4S-S-AdoMet</note>
    </ligand>
</feature>
<feature type="binding site" evidence="1">
    <location>
        <position position="71"/>
    </location>
    <ligand>
        <name>[4Fe-4S] cluster</name>
        <dbReference type="ChEBI" id="CHEBI:49883"/>
        <label>2</label>
        <note>4Fe-4S-S-AdoMet</note>
    </ligand>
</feature>
<feature type="binding site" evidence="1">
    <location>
        <position position="277"/>
    </location>
    <ligand>
        <name>[4Fe-4S] cluster</name>
        <dbReference type="ChEBI" id="CHEBI:49883"/>
        <label>1</label>
    </ligand>
</feature>
<accession>B4SHB4</accession>